<accession>F5HDD3</accession>
<gene>
    <name type="primary">US7</name>
</gene>
<keyword id="KW-1015">Disulfide bond</keyword>
<keyword id="KW-0325">Glycoprotein</keyword>
<keyword id="KW-1038">Host endoplasmic reticulum</keyword>
<keyword id="KW-1043">Host membrane</keyword>
<keyword id="KW-0393">Immunoglobulin domain</keyword>
<keyword id="KW-0472">Membrane</keyword>
<keyword id="KW-1185">Reference proteome</keyword>
<keyword id="KW-0732">Signal</keyword>
<keyword id="KW-0812">Transmembrane</keyword>
<keyword id="KW-1133">Transmembrane helix</keyword>
<dbReference type="EMBL" id="AY446894">
    <property type="protein sequence ID" value="AAR31696.1"/>
    <property type="molecule type" value="Genomic_DNA"/>
</dbReference>
<dbReference type="RefSeq" id="YP_081592.1">
    <property type="nucleotide sequence ID" value="NC_006273.2"/>
</dbReference>
<dbReference type="GlyCosmos" id="F5HDD3">
    <property type="glycosylation" value="1 site, No reported glycans"/>
</dbReference>
<dbReference type="DNASU" id="3077535"/>
<dbReference type="GeneID" id="3077535"/>
<dbReference type="KEGG" id="vg:3077535"/>
<dbReference type="Proteomes" id="UP000000938">
    <property type="component" value="Segment"/>
</dbReference>
<dbReference type="GO" id="GO:0044167">
    <property type="term" value="C:host cell endoplasmic reticulum membrane"/>
    <property type="evidence" value="ECO:0007669"/>
    <property type="project" value="UniProtKB-SubCell"/>
</dbReference>
<dbReference type="GO" id="GO:0016020">
    <property type="term" value="C:membrane"/>
    <property type="evidence" value="ECO:0007669"/>
    <property type="project" value="UniProtKB-KW"/>
</dbReference>
<dbReference type="GO" id="GO:0052031">
    <property type="term" value="P:symbiont-mediated perturbation of host defense response"/>
    <property type="evidence" value="ECO:0007669"/>
    <property type="project" value="InterPro"/>
</dbReference>
<dbReference type="InterPro" id="IPR012536">
    <property type="entry name" value="CMV_US"/>
</dbReference>
<dbReference type="Pfam" id="PF08001">
    <property type="entry name" value="CMV_US"/>
    <property type="match status" value="1"/>
</dbReference>
<sequence>MRIQLLLVSTLVASIVATRVEDMATFRTEKQWQQDLQYRREFVKRQLAPKPKSNIVVSHTVSCVIDGGNMTSVWRFEGQFNPHIASEVILHDTSGLYNVPHEVQNDGQVLTVTVKRSAPADIAKVLISLKPVQLSSGQYECRPQLQLPWVPRPSSFMYDSYRLWYEKRWLTIILYVFMWTYLVTLLQYCIVRFIGTRLFYFLQRNITIRFTGKPTYNLLTYPVKG</sequence>
<organismHost>
    <name type="scientific">Homo sapiens</name>
    <name type="common">Human</name>
    <dbReference type="NCBI Taxonomy" id="9606"/>
</organismHost>
<name>US07_HCMVM</name>
<organism>
    <name type="scientific">Human cytomegalovirus (strain Merlin)</name>
    <name type="common">HHV-5</name>
    <name type="synonym">Human herpesvirus 5</name>
    <dbReference type="NCBI Taxonomy" id="295027"/>
    <lineage>
        <taxon>Viruses</taxon>
        <taxon>Duplodnaviria</taxon>
        <taxon>Heunggongvirae</taxon>
        <taxon>Peploviricota</taxon>
        <taxon>Herviviricetes</taxon>
        <taxon>Herpesvirales</taxon>
        <taxon>Orthoherpesviridae</taxon>
        <taxon>Betaherpesvirinae</taxon>
        <taxon>Cytomegalovirus</taxon>
        <taxon>Cytomegalovirus humanbeta5</taxon>
        <taxon>Human cytomegalovirus</taxon>
    </lineage>
</organism>
<protein>
    <recommendedName>
        <fullName>Membrane glycoprotein US7</fullName>
    </recommendedName>
</protein>
<feature type="signal peptide" evidence="2">
    <location>
        <begin position="1"/>
        <end position="17"/>
    </location>
</feature>
<feature type="chain" id="PRO_0000417853" description="Membrane glycoprotein US7">
    <location>
        <begin position="18"/>
        <end position="225"/>
    </location>
</feature>
<feature type="topological domain" description="Lumenal" evidence="2">
    <location>
        <begin position="18"/>
        <end position="170"/>
    </location>
</feature>
<feature type="transmembrane region" description="Helical" evidence="2">
    <location>
        <begin position="171"/>
        <end position="191"/>
    </location>
</feature>
<feature type="topological domain" description="Cytoplasmic" evidence="2">
    <location>
        <begin position="192"/>
        <end position="225"/>
    </location>
</feature>
<feature type="domain" description="Ig-like H-type">
    <location>
        <begin position="54"/>
        <end position="145"/>
    </location>
</feature>
<feature type="glycosylation site" description="N-linked (GlcNAc...) asparagine; by host" evidence="2">
    <location>
        <position position="69"/>
    </location>
</feature>
<feature type="disulfide bond" evidence="1">
    <location>
        <begin position="63"/>
        <end position="141"/>
    </location>
</feature>
<evidence type="ECO:0000250" key="1"/>
<evidence type="ECO:0000255" key="2"/>
<evidence type="ECO:0000305" key="3"/>
<comment type="subcellular location">
    <subcellularLocation>
        <location evidence="1">Host endoplasmic reticulum membrane</location>
        <topology evidence="1">Single-pass type I membrane protein</topology>
    </subcellularLocation>
</comment>
<comment type="similarity">
    <text evidence="3">Belongs to the cytomegalovirus US6 family.</text>
</comment>
<reference key="1">
    <citation type="journal article" date="2004" name="J. Gen. Virol.">
        <title>Genetic content of wild-type human cytomegalovirus.</title>
        <authorList>
            <person name="Dolan A."/>
            <person name="Cunningham C."/>
            <person name="Hector R.D."/>
            <person name="Hassan-Walker A.F."/>
            <person name="Lee L."/>
            <person name="Addison C."/>
            <person name="Dargan D.J."/>
            <person name="McGeoch D.J."/>
            <person name="Gatherer D."/>
            <person name="Emery V.C."/>
            <person name="Griffiths P.D."/>
            <person name="Sinzger C."/>
            <person name="McSharry B.P."/>
            <person name="Wilkinson G.W.G."/>
            <person name="Davison A.J."/>
        </authorList>
    </citation>
    <scope>NUCLEOTIDE SEQUENCE [LARGE SCALE GENOMIC DNA]</scope>
</reference>
<proteinExistence type="inferred from homology"/>